<comment type="function">
    <text evidence="1">Reversibly transfers an adenylyl group from ATP to 4'-phosphopantetheine, yielding dephospho-CoA (dPCoA) and pyrophosphate.</text>
</comment>
<comment type="catalytic activity">
    <reaction evidence="1">
        <text>(R)-4'-phosphopantetheine + ATP + H(+) = 3'-dephospho-CoA + diphosphate</text>
        <dbReference type="Rhea" id="RHEA:19801"/>
        <dbReference type="ChEBI" id="CHEBI:15378"/>
        <dbReference type="ChEBI" id="CHEBI:30616"/>
        <dbReference type="ChEBI" id="CHEBI:33019"/>
        <dbReference type="ChEBI" id="CHEBI:57328"/>
        <dbReference type="ChEBI" id="CHEBI:61723"/>
        <dbReference type="EC" id="2.7.7.3"/>
    </reaction>
</comment>
<comment type="cofactor">
    <cofactor evidence="1">
        <name>Mg(2+)</name>
        <dbReference type="ChEBI" id="CHEBI:18420"/>
    </cofactor>
</comment>
<comment type="pathway">
    <text evidence="1">Cofactor biosynthesis; coenzyme A biosynthesis; CoA from (R)-pantothenate: step 4/5.</text>
</comment>
<comment type="subunit">
    <text evidence="1">Homohexamer.</text>
</comment>
<comment type="subcellular location">
    <subcellularLocation>
        <location evidence="1">Cytoplasm</location>
    </subcellularLocation>
</comment>
<comment type="similarity">
    <text evidence="1">Belongs to the bacterial CoaD family.</text>
</comment>
<dbReference type="EC" id="2.7.7.3" evidence="1"/>
<dbReference type="EMBL" id="CP000436">
    <property type="protein sequence ID" value="ABI25857.1"/>
    <property type="molecule type" value="Genomic_DNA"/>
</dbReference>
<dbReference type="SMR" id="Q0I593"/>
<dbReference type="KEGG" id="hso:HS_1589"/>
<dbReference type="eggNOG" id="COG0669">
    <property type="taxonomic scope" value="Bacteria"/>
</dbReference>
<dbReference type="HOGENOM" id="CLU_100149_0_1_6"/>
<dbReference type="UniPathway" id="UPA00241">
    <property type="reaction ID" value="UER00355"/>
</dbReference>
<dbReference type="GO" id="GO:0005737">
    <property type="term" value="C:cytoplasm"/>
    <property type="evidence" value="ECO:0007669"/>
    <property type="project" value="UniProtKB-SubCell"/>
</dbReference>
<dbReference type="GO" id="GO:0005524">
    <property type="term" value="F:ATP binding"/>
    <property type="evidence" value="ECO:0007669"/>
    <property type="project" value="UniProtKB-KW"/>
</dbReference>
<dbReference type="GO" id="GO:0004595">
    <property type="term" value="F:pantetheine-phosphate adenylyltransferase activity"/>
    <property type="evidence" value="ECO:0007669"/>
    <property type="project" value="UniProtKB-UniRule"/>
</dbReference>
<dbReference type="GO" id="GO:0015937">
    <property type="term" value="P:coenzyme A biosynthetic process"/>
    <property type="evidence" value="ECO:0007669"/>
    <property type="project" value="UniProtKB-UniRule"/>
</dbReference>
<dbReference type="CDD" id="cd02163">
    <property type="entry name" value="PPAT"/>
    <property type="match status" value="1"/>
</dbReference>
<dbReference type="Gene3D" id="3.40.50.620">
    <property type="entry name" value="HUPs"/>
    <property type="match status" value="1"/>
</dbReference>
<dbReference type="HAMAP" id="MF_00151">
    <property type="entry name" value="PPAT_bact"/>
    <property type="match status" value="1"/>
</dbReference>
<dbReference type="InterPro" id="IPR004821">
    <property type="entry name" value="Cyt_trans-like"/>
</dbReference>
<dbReference type="InterPro" id="IPR001980">
    <property type="entry name" value="PPAT"/>
</dbReference>
<dbReference type="InterPro" id="IPR014729">
    <property type="entry name" value="Rossmann-like_a/b/a_fold"/>
</dbReference>
<dbReference type="NCBIfam" id="TIGR01510">
    <property type="entry name" value="coaD_prev_kdtB"/>
    <property type="match status" value="1"/>
</dbReference>
<dbReference type="NCBIfam" id="TIGR00125">
    <property type="entry name" value="cyt_tran_rel"/>
    <property type="match status" value="1"/>
</dbReference>
<dbReference type="PANTHER" id="PTHR21342">
    <property type="entry name" value="PHOSPHOPANTETHEINE ADENYLYLTRANSFERASE"/>
    <property type="match status" value="1"/>
</dbReference>
<dbReference type="PANTHER" id="PTHR21342:SF1">
    <property type="entry name" value="PHOSPHOPANTETHEINE ADENYLYLTRANSFERASE"/>
    <property type="match status" value="1"/>
</dbReference>
<dbReference type="Pfam" id="PF01467">
    <property type="entry name" value="CTP_transf_like"/>
    <property type="match status" value="1"/>
</dbReference>
<dbReference type="PRINTS" id="PR01020">
    <property type="entry name" value="LPSBIOSNTHSS"/>
</dbReference>
<dbReference type="SUPFAM" id="SSF52374">
    <property type="entry name" value="Nucleotidylyl transferase"/>
    <property type="match status" value="1"/>
</dbReference>
<protein>
    <recommendedName>
        <fullName evidence="1">Phosphopantetheine adenylyltransferase</fullName>
        <ecNumber evidence="1">2.7.7.3</ecNumber>
    </recommendedName>
    <alternativeName>
        <fullName evidence="1">Dephospho-CoA pyrophosphorylase</fullName>
    </alternativeName>
    <alternativeName>
        <fullName evidence="1">Pantetheine-phosphate adenylyltransferase</fullName>
        <shortName evidence="1">PPAT</shortName>
    </alternativeName>
</protein>
<sequence length="158" mass="17623">MTTVIYPGTFDPITNGHMDIIQRSAVLFSKVIVAVAKNPSKQPLFNLAERVELVQLSVVHLGNVEVIGFDDLLANVVKARQIDAIIRGVRTTMDFEYESQLAHLNRLLTNGVESLFLPPTEQWSYVSSTIVRDIFLHQGDVSRLVPAAVLRALEKRAK</sequence>
<proteinExistence type="inferred from homology"/>
<evidence type="ECO:0000255" key="1">
    <source>
        <dbReference type="HAMAP-Rule" id="MF_00151"/>
    </source>
</evidence>
<name>COAD_HISS1</name>
<feature type="chain" id="PRO_1000011155" description="Phosphopantetheine adenylyltransferase">
    <location>
        <begin position="1"/>
        <end position="158"/>
    </location>
</feature>
<feature type="binding site" evidence="1">
    <location>
        <begin position="9"/>
        <end position="10"/>
    </location>
    <ligand>
        <name>ATP</name>
        <dbReference type="ChEBI" id="CHEBI:30616"/>
    </ligand>
</feature>
<feature type="binding site" evidence="1">
    <location>
        <position position="9"/>
    </location>
    <ligand>
        <name>substrate</name>
    </ligand>
</feature>
<feature type="binding site" evidence="1">
    <location>
        <position position="17"/>
    </location>
    <ligand>
        <name>ATP</name>
        <dbReference type="ChEBI" id="CHEBI:30616"/>
    </ligand>
</feature>
<feature type="binding site" evidence="1">
    <location>
        <position position="41"/>
    </location>
    <ligand>
        <name>substrate</name>
    </ligand>
</feature>
<feature type="binding site" evidence="1">
    <location>
        <position position="73"/>
    </location>
    <ligand>
        <name>substrate</name>
    </ligand>
</feature>
<feature type="binding site" evidence="1">
    <location>
        <position position="87"/>
    </location>
    <ligand>
        <name>substrate</name>
    </ligand>
</feature>
<feature type="binding site" evidence="1">
    <location>
        <begin position="88"/>
        <end position="90"/>
    </location>
    <ligand>
        <name>ATP</name>
        <dbReference type="ChEBI" id="CHEBI:30616"/>
    </ligand>
</feature>
<feature type="binding site" evidence="1">
    <location>
        <position position="98"/>
    </location>
    <ligand>
        <name>ATP</name>
        <dbReference type="ChEBI" id="CHEBI:30616"/>
    </ligand>
</feature>
<feature type="binding site" evidence="1">
    <location>
        <begin position="123"/>
        <end position="129"/>
    </location>
    <ligand>
        <name>ATP</name>
        <dbReference type="ChEBI" id="CHEBI:30616"/>
    </ligand>
</feature>
<feature type="site" description="Transition state stabilizer" evidence="1">
    <location>
        <position position="17"/>
    </location>
</feature>
<keyword id="KW-0067">ATP-binding</keyword>
<keyword id="KW-0173">Coenzyme A biosynthesis</keyword>
<keyword id="KW-0963">Cytoplasm</keyword>
<keyword id="KW-0460">Magnesium</keyword>
<keyword id="KW-0547">Nucleotide-binding</keyword>
<keyword id="KW-0548">Nucleotidyltransferase</keyword>
<keyword id="KW-0808">Transferase</keyword>
<accession>Q0I593</accession>
<organism>
    <name type="scientific">Histophilus somni (strain 129Pt)</name>
    <name type="common">Haemophilus somnus</name>
    <dbReference type="NCBI Taxonomy" id="205914"/>
    <lineage>
        <taxon>Bacteria</taxon>
        <taxon>Pseudomonadati</taxon>
        <taxon>Pseudomonadota</taxon>
        <taxon>Gammaproteobacteria</taxon>
        <taxon>Pasteurellales</taxon>
        <taxon>Pasteurellaceae</taxon>
        <taxon>Histophilus</taxon>
    </lineage>
</organism>
<reference key="1">
    <citation type="journal article" date="2007" name="J. Bacteriol.">
        <title>Complete genome sequence of Haemophilus somnus (Histophilus somni) strain 129Pt and comparison to Haemophilus ducreyi 35000HP and Haemophilus influenzae Rd.</title>
        <authorList>
            <person name="Challacombe J.F."/>
            <person name="Duncan A.J."/>
            <person name="Brettin T.S."/>
            <person name="Bruce D."/>
            <person name="Chertkov O."/>
            <person name="Detter J.C."/>
            <person name="Han C.S."/>
            <person name="Misra M."/>
            <person name="Richardson P."/>
            <person name="Tapia R."/>
            <person name="Thayer N."/>
            <person name="Xie G."/>
            <person name="Inzana T.J."/>
        </authorList>
    </citation>
    <scope>NUCLEOTIDE SEQUENCE [LARGE SCALE GENOMIC DNA]</scope>
    <source>
        <strain>129Pt</strain>
    </source>
</reference>
<gene>
    <name evidence="1" type="primary">coaD</name>
    <name type="ordered locus">HS_1589</name>
</gene>